<protein>
    <recommendedName>
        <fullName evidence="1">Sec-independent protein translocase protein TatA</fullName>
    </recommendedName>
</protein>
<reference key="1">
    <citation type="journal article" date="2002" name="J. Bacteriol.">
        <title>Whole-genome comparison of Mycobacterium tuberculosis clinical and laboratory strains.</title>
        <authorList>
            <person name="Fleischmann R.D."/>
            <person name="Alland D."/>
            <person name="Eisen J.A."/>
            <person name="Carpenter L."/>
            <person name="White O."/>
            <person name="Peterson J.D."/>
            <person name="DeBoy R.T."/>
            <person name="Dodson R.J."/>
            <person name="Gwinn M.L."/>
            <person name="Haft D.H."/>
            <person name="Hickey E.K."/>
            <person name="Kolonay J.F."/>
            <person name="Nelson W.C."/>
            <person name="Umayam L.A."/>
            <person name="Ermolaeva M.D."/>
            <person name="Salzberg S.L."/>
            <person name="Delcher A."/>
            <person name="Utterback T.R."/>
            <person name="Weidman J.F."/>
            <person name="Khouri H.M."/>
            <person name="Gill J."/>
            <person name="Mikula A."/>
            <person name="Bishai W."/>
            <person name="Jacobs W.R. Jr."/>
            <person name="Venter J.C."/>
            <person name="Fraser C.M."/>
        </authorList>
    </citation>
    <scope>NUCLEOTIDE SEQUENCE [LARGE SCALE GENOMIC DNA]</scope>
    <source>
        <strain>CDC 1551 / Oshkosh</strain>
    </source>
</reference>
<gene>
    <name evidence="1" type="primary">tatA</name>
    <name type="ordered locus">MT2155</name>
</gene>
<proteinExistence type="inferred from homology"/>
<comment type="function">
    <text evidence="1">Part of the twin-arginine translocation (Tat) system that transports large folded proteins containing a characteristic twin-arginine motif in their signal peptide across membranes. TatA could form the protein-conducting channel of the Tat system.</text>
</comment>
<comment type="subunit">
    <text evidence="1">The Tat system comprises two distinct complexes: a TatABC complex, containing multiple copies of TatA, TatB and TatC subunits, and a separate TatA complex, containing only TatA subunits. Substrates initially bind to the TatABC complex, which probably triggers association of the separate TatA complex to form the active translocon.</text>
</comment>
<comment type="subcellular location">
    <subcellularLocation>
        <location evidence="1">Cell membrane</location>
        <topology evidence="1">Single-pass membrane protein</topology>
    </subcellularLocation>
</comment>
<comment type="similarity">
    <text evidence="1">Belongs to the TatA/E family.</text>
</comment>
<comment type="sequence caution" evidence="3">
    <conflict type="erroneous initiation">
        <sequence resource="EMBL-CDS" id="AAK46436"/>
    </conflict>
</comment>
<evidence type="ECO:0000255" key="1">
    <source>
        <dbReference type="HAMAP-Rule" id="MF_00236"/>
    </source>
</evidence>
<evidence type="ECO:0000256" key="2">
    <source>
        <dbReference type="SAM" id="MobiDB-lite"/>
    </source>
</evidence>
<evidence type="ECO:0000305" key="3"/>
<sequence>MGSLSPWHWAILAVVVIVLFGAKKLPDAARSLGKSLRIFKSEVRELQNENKAEASIETPTPVQSQRVDPSAASGQDSTEARPA</sequence>
<accession>P9WGA0</accession>
<accession>L0TBI4</accession>
<accession>P66889</accession>
<accession>Q10703</accession>
<name>TATA_MYCTO</name>
<organism>
    <name type="scientific">Mycobacterium tuberculosis (strain CDC 1551 / Oshkosh)</name>
    <dbReference type="NCBI Taxonomy" id="83331"/>
    <lineage>
        <taxon>Bacteria</taxon>
        <taxon>Bacillati</taxon>
        <taxon>Actinomycetota</taxon>
        <taxon>Actinomycetes</taxon>
        <taxon>Mycobacteriales</taxon>
        <taxon>Mycobacteriaceae</taxon>
        <taxon>Mycobacterium</taxon>
        <taxon>Mycobacterium tuberculosis complex</taxon>
    </lineage>
</organism>
<keyword id="KW-1003">Cell membrane</keyword>
<keyword id="KW-0472">Membrane</keyword>
<keyword id="KW-0653">Protein transport</keyword>
<keyword id="KW-1185">Reference proteome</keyword>
<keyword id="KW-0811">Translocation</keyword>
<keyword id="KW-0812">Transmembrane</keyword>
<keyword id="KW-1133">Transmembrane helix</keyword>
<keyword id="KW-0813">Transport</keyword>
<feature type="chain" id="PRO_0000428398" description="Sec-independent protein translocase protein TatA">
    <location>
        <begin position="1"/>
        <end position="83"/>
    </location>
</feature>
<feature type="transmembrane region" description="Helical" evidence="1">
    <location>
        <begin position="1"/>
        <end position="21"/>
    </location>
</feature>
<feature type="region of interest" description="Disordered" evidence="2">
    <location>
        <begin position="48"/>
        <end position="83"/>
    </location>
</feature>
<feature type="compositionally biased region" description="Polar residues" evidence="2">
    <location>
        <begin position="57"/>
        <end position="77"/>
    </location>
</feature>
<dbReference type="EMBL" id="AE000516">
    <property type="protein sequence ID" value="AAK46436.1"/>
    <property type="status" value="ALT_INIT"/>
    <property type="molecule type" value="Genomic_DNA"/>
</dbReference>
<dbReference type="PIR" id="A70768">
    <property type="entry name" value="A70768"/>
</dbReference>
<dbReference type="RefSeq" id="WP_003410768.1">
    <property type="nucleotide sequence ID" value="NZ_KK341227.1"/>
</dbReference>
<dbReference type="SMR" id="P9WGA0"/>
<dbReference type="GeneID" id="45426071"/>
<dbReference type="KEGG" id="mtc:MT2155"/>
<dbReference type="PATRIC" id="fig|83331.31.peg.2324"/>
<dbReference type="HOGENOM" id="CLU_086034_4_2_11"/>
<dbReference type="Proteomes" id="UP000001020">
    <property type="component" value="Chromosome"/>
</dbReference>
<dbReference type="GO" id="GO:0033281">
    <property type="term" value="C:TAT protein transport complex"/>
    <property type="evidence" value="ECO:0007669"/>
    <property type="project" value="UniProtKB-UniRule"/>
</dbReference>
<dbReference type="GO" id="GO:0008320">
    <property type="term" value="F:protein transmembrane transporter activity"/>
    <property type="evidence" value="ECO:0007669"/>
    <property type="project" value="UniProtKB-UniRule"/>
</dbReference>
<dbReference type="GO" id="GO:0043953">
    <property type="term" value="P:protein transport by the Tat complex"/>
    <property type="evidence" value="ECO:0007669"/>
    <property type="project" value="UniProtKB-UniRule"/>
</dbReference>
<dbReference type="Gene3D" id="1.20.5.3310">
    <property type="match status" value="1"/>
</dbReference>
<dbReference type="HAMAP" id="MF_00236">
    <property type="entry name" value="TatA_E"/>
    <property type="match status" value="1"/>
</dbReference>
<dbReference type="InterPro" id="IPR003369">
    <property type="entry name" value="TatA/B/E"/>
</dbReference>
<dbReference type="InterPro" id="IPR006312">
    <property type="entry name" value="TatA/E"/>
</dbReference>
<dbReference type="NCBIfam" id="NF001854">
    <property type="entry name" value="PRK00575.1"/>
    <property type="match status" value="1"/>
</dbReference>
<dbReference type="NCBIfam" id="TIGR01411">
    <property type="entry name" value="tatAE"/>
    <property type="match status" value="1"/>
</dbReference>
<dbReference type="PANTHER" id="PTHR42982">
    <property type="entry name" value="SEC-INDEPENDENT PROTEIN TRANSLOCASE PROTEIN TATA"/>
    <property type="match status" value="1"/>
</dbReference>
<dbReference type="PANTHER" id="PTHR42982:SF8">
    <property type="entry name" value="SEC-INDEPENDENT PROTEIN TRANSLOCASE PROTEIN TATA"/>
    <property type="match status" value="1"/>
</dbReference>
<dbReference type="Pfam" id="PF02416">
    <property type="entry name" value="TatA_B_E"/>
    <property type="match status" value="1"/>
</dbReference>